<sequence length="243" mass="28228">MPCNRSRPSLYSLSYIKRGKTRNYLYPFWSPFAYYLYCYKYRITLREKMLPCCYKSITYKEQEDLTLRPHCCLPCSCLPCSCLQCSESLGGLQVGRSTAQEKDHSQLKELYSAGNLTVLSTDPLLHQDPVQLDFHFRLTPHSSAHWHGLLCDHRLFLDIPYQALDQGNRESLTATLEYVEEKTNVDSVFVNFQIDRKDRGALLRAFSYMGFEVVRPDHPALPPWDNVIFMVYPLERDLGHPGQ</sequence>
<reference key="1">
    <citation type="journal article" date="2000" name="Proc. Natl. Acad. Sci. U.S.A.">
        <title>Discovery of a spermatogenesis stage-specific ornithine decarboxylase antizyme: antizyme 3.</title>
        <authorList>
            <person name="Ivanov I.P."/>
            <person name="Rohrwasser A."/>
            <person name="Terreros D.A."/>
            <person name="Gesteland R.F."/>
            <person name="Atkins J.F."/>
        </authorList>
    </citation>
    <scope>NUCLEOTIDE SEQUENCE [MRNA]</scope>
</reference>
<reference key="2">
    <citation type="journal article" date="2000" name="Genes Cells">
        <title>Identification and characterization of testis specific ornithine decarboxylase antizyme (OAZ-t) gene: expression in haploid germ cells and polyamine-induced frameshifting.</title>
        <authorList>
            <person name="Tosaka Y."/>
            <person name="Tanaka H."/>
            <person name="Yano Y."/>
            <person name="Masai K."/>
            <person name="Nozaki M."/>
            <person name="Yomogida K."/>
            <person name="Otani S."/>
            <person name="Nojima H."/>
            <person name="Nishimune Y."/>
        </authorList>
    </citation>
    <scope>NUCLEOTIDE SEQUENCE [GENOMIC DNA]</scope>
    <source>
        <strain>C57BL/6J</strain>
        <tissue>Testis</tissue>
    </source>
</reference>
<reference key="3">
    <citation type="journal article" date="2005" name="FEBS Lett.">
        <title>Yeast two-hybrid screens imply that GGNBP1, GGNBP2 and OAZ3 are potential interaction partners of testicular germ cell-specific protein GGN1.</title>
        <authorList>
            <person name="Zhang J."/>
            <person name="Wang Y."/>
            <person name="Zhou Y."/>
            <person name="Cao Z."/>
            <person name="Huang P."/>
            <person name="Lu B."/>
        </authorList>
    </citation>
    <scope>SUBCELLULAR LOCATION</scope>
    <scope>INTERACTION WITH GGN</scope>
</reference>
<reference key="4">
    <citation type="journal article" date="2006" name="J. Biol. Chem.">
        <title>Mouse ornithine decarboxylase-like gene encodes an antizyme inhibitor devoid of ornithine and arginine decarboxylating activity.</title>
        <authorList>
            <person name="Lopez-Contreras A.J."/>
            <person name="Lopez-Garcia C."/>
            <person name="Jimenez-Cervantes C."/>
            <person name="Cremades A."/>
            <person name="Penafiel R."/>
        </authorList>
    </citation>
    <scope>FUNCTION</scope>
    <scope>INTERACTION WITH AZIN2</scope>
</reference>
<reference key="5">
    <citation type="journal article" date="2008" name="Biochem. J.">
        <title>ODCp, a brain- and testis-specific ornithine decarboxylase paralogue, functions as an antizyme inhibitor, although less efficiently than AzI1.</title>
        <authorList>
            <person name="Snapir Z."/>
            <person name="Keren-Paz A."/>
            <person name="Bercovich Z."/>
            <person name="Kahana C."/>
        </authorList>
    </citation>
    <scope>FUNCTION</scope>
    <scope>INTERACTION WITH AZIN2</scope>
</reference>
<reference key="6">
    <citation type="journal article" date="2008" name="J. Biol. Chem.">
        <title>Antizyme inhibitor 2 (AZIN2/ODCp) stimulates polyamine uptake in mammalian cells.</title>
        <authorList>
            <person name="Lopez-Contreras A.J."/>
            <person name="Ramos-Molina B."/>
            <person name="Cremades A."/>
            <person name="Penafiel R."/>
        </authorList>
    </citation>
    <scope>FUNCTION</scope>
</reference>
<reference key="7">
    <citation type="journal article" date="2009" name="Int. J. Biochem. Cell Biol.">
        <title>Expression of antizyme inhibitor 2 in male haploid germinal cells suggests a role in spermiogenesis.</title>
        <authorList>
            <person name="Lopez-Contreras A.J."/>
            <person name="Ramos-Molina B."/>
            <person name="Martinez-de-la-Torre M."/>
            <person name="Penafiel-Verdu C."/>
            <person name="Puelles L."/>
            <person name="Cremades A."/>
            <person name="Penafiel R."/>
        </authorList>
    </citation>
    <scope>FUNCTION</scope>
    <scope>INTERACTION WITH AZIN2</scope>
    <scope>TISSUE SPECIFICITY</scope>
</reference>
<reference key="8">
    <citation type="journal article" date="2009" name="J. Cell. Biochem.">
        <title>Subcellular localization of antizyme inhibitor 2 in mammalian cells: Influence of intrinsic sequences and interaction with antizymes.</title>
        <authorList>
            <person name="Lopez-Contreras A.J."/>
            <person name="Sanchez-Laorden B.L."/>
            <person name="Ramos-Molina B."/>
            <person name="de la Morena M.E."/>
            <person name="Cremades A."/>
            <person name="Penafiel R."/>
        </authorList>
    </citation>
    <scope>FUNCTION</scope>
</reference>
<reference key="9">
    <citation type="journal article" date="2014" name="FEBS Open Bio">
        <title>Structural and degradative aspects of ornithine decarboxylase antizyme inhibitor 2.</title>
        <authorList>
            <person name="Ramos-Molina B."/>
            <person name="Lambertos A."/>
            <person name="Lopez-Contreras A.J."/>
            <person name="Kasprzak J.M."/>
            <person name="Czerwoniec A."/>
            <person name="Bujnicki J.M."/>
            <person name="Cremades A."/>
            <person name="Penafiel R."/>
        </authorList>
    </citation>
    <scope>FUNCTION</scope>
</reference>
<organism>
    <name type="scientific">Mus musculus</name>
    <name type="common">Mouse</name>
    <dbReference type="NCBI Taxonomy" id="10090"/>
    <lineage>
        <taxon>Eukaryota</taxon>
        <taxon>Metazoa</taxon>
        <taxon>Chordata</taxon>
        <taxon>Craniata</taxon>
        <taxon>Vertebrata</taxon>
        <taxon>Euteleostomi</taxon>
        <taxon>Mammalia</taxon>
        <taxon>Eutheria</taxon>
        <taxon>Euarchontoglires</taxon>
        <taxon>Glires</taxon>
        <taxon>Rodentia</taxon>
        <taxon>Myomorpha</taxon>
        <taxon>Muroidea</taxon>
        <taxon>Muridae</taxon>
        <taxon>Murinae</taxon>
        <taxon>Mus</taxon>
        <taxon>Mus</taxon>
    </lineage>
</organism>
<protein>
    <recommendedName>
        <fullName>Ornithine decarboxylase antizyme 3</fullName>
        <shortName>AZ3</shortName>
        <shortName>ODC-Az 3</shortName>
    </recommendedName>
    <alternativeName>
        <fullName>OAZ-t</fullName>
    </alternativeName>
</protein>
<dbReference type="EMBL" id="AF175297">
    <property type="protein sequence ID" value="AAD51735.1"/>
    <property type="status" value="ALT_SEQ"/>
    <property type="molecule type" value="mRNA"/>
</dbReference>
<dbReference type="EMBL" id="AB016275">
    <property type="protein sequence ID" value="BAA81913.1"/>
    <property type="status" value="ALT_SEQ"/>
    <property type="molecule type" value="Genomic_DNA"/>
</dbReference>
<dbReference type="CCDS" id="CCDS84654.1">
    <molecule id="Q9R109-1"/>
</dbReference>
<dbReference type="RefSeq" id="NP_058597.2">
    <molecule id="Q9R109-1"/>
    <property type="nucleotide sequence ID" value="NM_016901.3"/>
</dbReference>
<dbReference type="SMR" id="Q9R109"/>
<dbReference type="BioGRID" id="207485">
    <property type="interactions" value="1"/>
</dbReference>
<dbReference type="FunCoup" id="Q9R109">
    <property type="interactions" value="220"/>
</dbReference>
<dbReference type="IntAct" id="Q9R109">
    <property type="interactions" value="2"/>
</dbReference>
<dbReference type="MINT" id="Q9R109"/>
<dbReference type="STRING" id="10090.ENSMUSP00000143080"/>
<dbReference type="iPTMnet" id="Q9R109"/>
<dbReference type="PhosphoSitePlus" id="Q9R109"/>
<dbReference type="PaxDb" id="10090-ENSMUSP00000139408"/>
<dbReference type="ProteomicsDB" id="294264">
    <molecule id="Q9R109-1"/>
</dbReference>
<dbReference type="Antibodypedia" id="34072">
    <property type="antibodies" value="85 antibodies from 20 providers"/>
</dbReference>
<dbReference type="DNASU" id="53814"/>
<dbReference type="Ensembl" id="ENSMUST00000199678.4">
    <molecule id="Q9R109-1"/>
    <property type="protein sequence ID" value="ENSMUSP00000143080.3"/>
    <property type="gene ID" value="ENSMUSG00000028141.14"/>
</dbReference>
<dbReference type="GeneID" id="53814"/>
<dbReference type="KEGG" id="mmu:53814"/>
<dbReference type="UCSC" id="uc008qgh.3">
    <molecule id="Q9R109-1"/>
    <property type="organism name" value="mouse"/>
</dbReference>
<dbReference type="AGR" id="MGI:1858170"/>
<dbReference type="CTD" id="51686"/>
<dbReference type="MGI" id="MGI:1858170">
    <property type="gene designation" value="Oaz3"/>
</dbReference>
<dbReference type="VEuPathDB" id="HostDB:ENSMUSG00000028141"/>
<dbReference type="eggNOG" id="KOG4387">
    <property type="taxonomic scope" value="Eukaryota"/>
</dbReference>
<dbReference type="GeneTree" id="ENSGT00940000161581"/>
<dbReference type="InParanoid" id="Q9R109"/>
<dbReference type="OMA" id="YPLERDH"/>
<dbReference type="OrthoDB" id="5959761at2759"/>
<dbReference type="TreeFam" id="TF314741"/>
<dbReference type="Reactome" id="R-MMU-350562">
    <property type="pathway name" value="Regulation of ornithine decarboxylase (ODC)"/>
</dbReference>
<dbReference type="BioGRID-ORCS" id="53814">
    <property type="hits" value="4 hits in 25 CRISPR screens"/>
</dbReference>
<dbReference type="ChiTaRS" id="Oaz3">
    <property type="organism name" value="mouse"/>
</dbReference>
<dbReference type="PRO" id="PR:Q9R109"/>
<dbReference type="Proteomes" id="UP000000589">
    <property type="component" value="Chromosome 3"/>
</dbReference>
<dbReference type="RNAct" id="Q9R109">
    <property type="molecule type" value="protein"/>
</dbReference>
<dbReference type="Bgee" id="ENSMUSG00000028141">
    <property type="expression patterns" value="Expressed in seminiferous tubule of testis and 96 other cell types or tissues"/>
</dbReference>
<dbReference type="ExpressionAtlas" id="Q9R109">
    <property type="expression patterns" value="baseline and differential"/>
</dbReference>
<dbReference type="GO" id="GO:0005737">
    <property type="term" value="C:cytoplasm"/>
    <property type="evidence" value="ECO:0000314"/>
    <property type="project" value="MGI"/>
</dbReference>
<dbReference type="GO" id="GO:0005654">
    <property type="term" value="C:nucleoplasm"/>
    <property type="evidence" value="ECO:0007669"/>
    <property type="project" value="Ensembl"/>
</dbReference>
<dbReference type="GO" id="GO:0005634">
    <property type="term" value="C:nucleus"/>
    <property type="evidence" value="ECO:0000314"/>
    <property type="project" value="MGI"/>
</dbReference>
<dbReference type="GO" id="GO:0036126">
    <property type="term" value="C:sperm flagellum"/>
    <property type="evidence" value="ECO:0007669"/>
    <property type="project" value="Ensembl"/>
</dbReference>
<dbReference type="GO" id="GO:0071532">
    <property type="term" value="F:ankyrin repeat binding"/>
    <property type="evidence" value="ECO:0007669"/>
    <property type="project" value="Ensembl"/>
</dbReference>
<dbReference type="GO" id="GO:0008073">
    <property type="term" value="F:ornithine decarboxylase inhibitor activity"/>
    <property type="evidence" value="ECO:0000314"/>
    <property type="project" value="UniProtKB"/>
</dbReference>
<dbReference type="GO" id="GO:1902268">
    <property type="term" value="P:negative regulation of polyamine transmembrane transport"/>
    <property type="evidence" value="ECO:0000314"/>
    <property type="project" value="UniProtKB"/>
</dbReference>
<dbReference type="GO" id="GO:0051497">
    <property type="term" value="P:negative regulation of stress fiber assembly"/>
    <property type="evidence" value="ECO:0007669"/>
    <property type="project" value="Ensembl"/>
</dbReference>
<dbReference type="GO" id="GO:0006596">
    <property type="term" value="P:polyamine biosynthetic process"/>
    <property type="evidence" value="ECO:0007669"/>
    <property type="project" value="UniProtKB-KW"/>
</dbReference>
<dbReference type="GO" id="GO:0006595">
    <property type="term" value="P:polyamine metabolic process"/>
    <property type="evidence" value="ECO:0000304"/>
    <property type="project" value="MGI"/>
</dbReference>
<dbReference type="GO" id="GO:0090316">
    <property type="term" value="P:positive regulation of intracellular protein transport"/>
    <property type="evidence" value="ECO:0000314"/>
    <property type="project" value="UniProtKB"/>
</dbReference>
<dbReference type="GO" id="GO:0045732">
    <property type="term" value="P:positive regulation of protein catabolic process"/>
    <property type="evidence" value="ECO:0000314"/>
    <property type="project" value="UniProtKB"/>
</dbReference>
<dbReference type="GO" id="GO:0075523">
    <property type="term" value="P:viral translational frameshifting"/>
    <property type="evidence" value="ECO:0007669"/>
    <property type="project" value="UniProtKB-KW"/>
</dbReference>
<dbReference type="FunFam" id="3.40.630.60:FF:000002">
    <property type="entry name" value="Ornithine decarboxylase antizyme 3"/>
    <property type="match status" value="1"/>
</dbReference>
<dbReference type="Gene3D" id="3.40.630.60">
    <property type="match status" value="1"/>
</dbReference>
<dbReference type="InterPro" id="IPR016181">
    <property type="entry name" value="Acyl_CoA_acyltransferase"/>
</dbReference>
<dbReference type="InterPro" id="IPR002993">
    <property type="entry name" value="ODC_AZ"/>
</dbReference>
<dbReference type="InterPro" id="IPR038581">
    <property type="entry name" value="ODC_AZ_sf"/>
</dbReference>
<dbReference type="PANTHER" id="PTHR10279">
    <property type="entry name" value="ORNITHINE DECARBOXYLASE ANTIZYME"/>
    <property type="match status" value="1"/>
</dbReference>
<dbReference type="PANTHER" id="PTHR10279:SF9">
    <property type="entry name" value="ORNITHINE DECARBOXYLASE ANTIZYME 3"/>
    <property type="match status" value="1"/>
</dbReference>
<dbReference type="Pfam" id="PF02100">
    <property type="entry name" value="ODC_AZ"/>
    <property type="match status" value="1"/>
</dbReference>
<dbReference type="SUPFAM" id="SSF55729">
    <property type="entry name" value="Acyl-CoA N-acyltransferases (Nat)"/>
    <property type="match status" value="1"/>
</dbReference>
<dbReference type="PROSITE" id="PS01337">
    <property type="entry name" value="ODC_AZ"/>
    <property type="match status" value="1"/>
</dbReference>
<keyword id="KW-0963">Cytoplasm</keyword>
<keyword id="KW-0539">Nucleus</keyword>
<keyword id="KW-0597">Phosphoprotein</keyword>
<keyword id="KW-0620">Polyamine biosynthesis</keyword>
<keyword id="KW-1185">Reference proteome</keyword>
<keyword id="KW-0688">Ribosomal frameshifting</keyword>
<proteinExistence type="evidence at protein level"/>
<gene>
    <name type="primary">Oaz3</name>
</gene>
<feature type="chain" id="PRO_0000220860" description="Ornithine decarboxylase antizyme 3">
    <location>
        <begin position="1"/>
        <end position="243"/>
    </location>
</feature>
<feature type="modified residue" description="Phosphoserine" evidence="1">
    <location>
        <position position="6"/>
    </location>
</feature>
<feature type="modified residue" description="Phosphoserine" evidence="1">
    <location>
        <position position="9"/>
    </location>
</feature>
<feature type="modified residue" description="Phosphoserine" evidence="1">
    <location>
        <position position="12"/>
    </location>
</feature>
<evidence type="ECO:0000250" key="1">
    <source>
        <dbReference type="UniProtKB" id="A1BPI0"/>
    </source>
</evidence>
<evidence type="ECO:0000250" key="2">
    <source>
        <dbReference type="UniProtKB" id="P54368"/>
    </source>
</evidence>
<evidence type="ECO:0000269" key="3">
    <source>
    </source>
</evidence>
<evidence type="ECO:0000269" key="4">
    <source>
    </source>
</evidence>
<evidence type="ECO:0000269" key="5">
    <source>
    </source>
</evidence>
<evidence type="ECO:0000269" key="6">
    <source>
    </source>
</evidence>
<evidence type="ECO:0000269" key="7">
    <source>
    </source>
</evidence>
<evidence type="ECO:0000269" key="8">
    <source>
    </source>
</evidence>
<evidence type="ECO:0000269" key="9">
    <source>
    </source>
</evidence>
<evidence type="ECO:0000305" key="10"/>
<name>OAZ3_MOUSE</name>
<accession>Q9R109</accession>
<accession>Q9WVT4</accession>
<comment type="function">
    <text evidence="4 5 6 7 8 9">Ornithine decarboxylase (ODC) antizyme protein that negatively regulates ODC activity and intracellular polyamine biosynthesis and uptake in response to increased intracellular polyamine levels. Binds to ODC monomers, inhibiting the assembly of the functional ODC homodimers. Does not target the ODC monomers for degradation, which allows a protein synthesis-independent restoration of ODC activity (PubMed:16916800, PubMed:18508777, PubMed:18973822). Stabilizes AZIN2 by interfering with its ubiquitination (PubMed:18062773). Involved in the translocation of AZNI2 from ER-Golgi intermediate compartment (ERGIC) to the cytosol (PubMed:19449338). Probably plays a key role in spermatogenesis by regulating the intracellular concentration of polyamines in haploid germ cells (PubMed:24967154).</text>
</comment>
<comment type="subunit">
    <text evidence="2 3 4 5 7">Interacts with ODC1 and thereby sterically blocks ODC homodimerization (By similarity). Interacts with AZIN2; this interaction disrupts the interaction between the antizyme and ODC1 (PubMed:16916800, PubMed:18062773, PubMed:18973822). Interacts with GGN (PubMed:15642376).</text>
</comment>
<comment type="interaction">
    <interactant intactId="EBI-4370103">
        <id>Q9R109</id>
    </interactant>
    <interactant intactId="EBI-9656869">
        <id>Q8BVM4</id>
        <label>Azin2</label>
    </interactant>
    <organismsDiffer>false</organismsDiffer>
    <experiments>2</experiments>
</comment>
<comment type="subcellular location">
    <subcellularLocation>
        <location evidence="3">Nucleus</location>
    </subcellularLocation>
    <subcellularLocation>
        <location evidence="3">Cytoplasm</location>
    </subcellularLocation>
</comment>
<comment type="alternative products">
    <event type="ribosomal frameshifting"/>
    <isoform>
        <id>Q9R109-1</id>
        <name>1</name>
        <sequence type="displayed"/>
    </isoform>
    <text>A ribosomal frameshift occurs between the codons for Ser-86 and Glu-87. An autoregulatory mechanism enables modulation of frameshifting according to the cellular concentration of polyamines.</text>
</comment>
<comment type="tissue specificity">
    <text evidence="7">Testis specific. Expressed throughout the differentiation process from spermatids to spermatozoa in the inner part of the seminiferous tubules.</text>
</comment>
<comment type="developmental stage">
    <text>Expression starts early in spermiogenesis and finishes in the late spermatid phase.</text>
</comment>
<comment type="similarity">
    <text evidence="10">Belongs to the ODC antizyme family.</text>
</comment>
<comment type="sequence caution" evidence="10">
    <conflict type="erroneous initiation">
        <sequence resource="EMBL-CDS" id="AAD51735"/>
    </conflict>
    <text>Truncated N-terminus.</text>
</comment>
<comment type="sequence caution" evidence="10">
    <conflict type="miscellaneous discrepancy">
        <sequence resource="EMBL-CDS" id="AAD51735"/>
    </conflict>
    <text>Unusual initiator. The initiator methionine is coded by a non-canonical CTG leucine codon.</text>
</comment>
<comment type="sequence caution" evidence="10">
    <conflict type="erroneous initiation">
        <sequence resource="EMBL-CDS" id="BAA81913"/>
    </conflict>
    <text>Truncated N-terminus.</text>
</comment>
<comment type="sequence caution" evidence="10">
    <conflict type="frameshift">
        <sequence resource="EMBL-CDS" id="BAA81913"/>
    </conflict>
</comment>
<comment type="sequence caution" evidence="10">
    <conflict type="miscellaneous discrepancy">
        <sequence resource="EMBL-CDS" id="BAA81913"/>
    </conflict>
    <text>Unusual initiator. The initiator methionine is coded by a non-canonical CTG leucine codon.</text>
</comment>